<reference key="1">
    <citation type="journal article" date="2003" name="Lancet">
        <title>Genome sequence of Vibrio parahaemolyticus: a pathogenic mechanism distinct from that of V. cholerae.</title>
        <authorList>
            <person name="Makino K."/>
            <person name="Oshima K."/>
            <person name="Kurokawa K."/>
            <person name="Yokoyama K."/>
            <person name="Uda T."/>
            <person name="Tagomori K."/>
            <person name="Iijima Y."/>
            <person name="Najima M."/>
            <person name="Nakano M."/>
            <person name="Yamashita A."/>
            <person name="Kubota Y."/>
            <person name="Kimura S."/>
            <person name="Yasunaga T."/>
            <person name="Honda T."/>
            <person name="Shinagawa H."/>
            <person name="Hattori M."/>
            <person name="Iida T."/>
        </authorList>
    </citation>
    <scope>NUCLEOTIDE SEQUENCE [LARGE SCALE GENOMIC DNA]</scope>
    <source>
        <strain>RIMD 2210633</strain>
    </source>
</reference>
<gene>
    <name evidence="1" type="primary">rlmB</name>
    <name type="ordered locus">VP2806</name>
</gene>
<name>RLMB_VIBPA</name>
<sequence length="247" mass="26715">MSNEFIYGIHAVKAVLEREPERFIEAYVLKGRQDDRLMPILNDLQVCGVSIQQMTRKTLDDKAHGANHQGIIARVKVAKQLNENDIDDILAQHETPLLLVLDGVTDPHNLGACLRNADAAGVAAIIVPKDRSAPMNATVSKVACGAAEVVPLIRVTNLARTMRTLQEQGIWFVGTAGEATHDIYQAKLTGPLAIVMGAEGDGMRRLTRETCDDLIKIPMAGSVSSLNVSVASGICLFEAVRQRLAAK</sequence>
<protein>
    <recommendedName>
        <fullName evidence="1">23S rRNA (guanosine-2'-O-)-methyltransferase RlmB</fullName>
        <ecNumber evidence="1">2.1.1.185</ecNumber>
    </recommendedName>
    <alternativeName>
        <fullName evidence="1">23S rRNA (guanosine2251 2'-O)-methyltransferase</fullName>
    </alternativeName>
    <alternativeName>
        <fullName evidence="1">23S rRNA Gm2251 2'-O-methyltransferase</fullName>
    </alternativeName>
</protein>
<organism>
    <name type="scientific">Vibrio parahaemolyticus serotype O3:K6 (strain RIMD 2210633)</name>
    <dbReference type="NCBI Taxonomy" id="223926"/>
    <lineage>
        <taxon>Bacteria</taxon>
        <taxon>Pseudomonadati</taxon>
        <taxon>Pseudomonadota</taxon>
        <taxon>Gammaproteobacteria</taxon>
        <taxon>Vibrionales</taxon>
        <taxon>Vibrionaceae</taxon>
        <taxon>Vibrio</taxon>
    </lineage>
</organism>
<dbReference type="EC" id="2.1.1.185" evidence="1"/>
<dbReference type="EMBL" id="BA000031">
    <property type="protein sequence ID" value="BAC61069.1"/>
    <property type="molecule type" value="Genomic_DNA"/>
</dbReference>
<dbReference type="RefSeq" id="NP_799185.1">
    <property type="nucleotide sequence ID" value="NC_004603.1"/>
</dbReference>
<dbReference type="RefSeq" id="WP_005480034.1">
    <property type="nucleotide sequence ID" value="NC_004603.1"/>
</dbReference>
<dbReference type="SMR" id="Q87L11"/>
<dbReference type="GeneID" id="1190356"/>
<dbReference type="KEGG" id="vpa:VP2806"/>
<dbReference type="PATRIC" id="fig|223926.6.peg.2698"/>
<dbReference type="eggNOG" id="COG0566">
    <property type="taxonomic scope" value="Bacteria"/>
</dbReference>
<dbReference type="HOGENOM" id="CLU_021322_0_1_6"/>
<dbReference type="Proteomes" id="UP000002493">
    <property type="component" value="Chromosome 1"/>
</dbReference>
<dbReference type="GO" id="GO:0005829">
    <property type="term" value="C:cytosol"/>
    <property type="evidence" value="ECO:0007669"/>
    <property type="project" value="TreeGrafter"/>
</dbReference>
<dbReference type="GO" id="GO:0003723">
    <property type="term" value="F:RNA binding"/>
    <property type="evidence" value="ECO:0007669"/>
    <property type="project" value="InterPro"/>
</dbReference>
<dbReference type="GO" id="GO:0070039">
    <property type="term" value="F:rRNA (guanosine-2'-O-)-methyltransferase activity"/>
    <property type="evidence" value="ECO:0007669"/>
    <property type="project" value="UniProtKB-UniRule"/>
</dbReference>
<dbReference type="CDD" id="cd18103">
    <property type="entry name" value="SpoU-like_RlmB"/>
    <property type="match status" value="1"/>
</dbReference>
<dbReference type="FunFam" id="3.40.1280.10:FF:000005">
    <property type="entry name" value="23S rRNA (guanosine-2'-O-)-methyltransferase RlmB"/>
    <property type="match status" value="1"/>
</dbReference>
<dbReference type="Gene3D" id="3.30.1330.30">
    <property type="match status" value="1"/>
</dbReference>
<dbReference type="Gene3D" id="3.40.1280.10">
    <property type="match status" value="1"/>
</dbReference>
<dbReference type="HAMAP" id="MF_01887">
    <property type="entry name" value="23SrRNA_methyltr_B"/>
    <property type="match status" value="1"/>
</dbReference>
<dbReference type="InterPro" id="IPR024915">
    <property type="entry name" value="23S_rRNA_MeTrfase_RlmB"/>
</dbReference>
<dbReference type="InterPro" id="IPR029028">
    <property type="entry name" value="Alpha/beta_knot_MTases"/>
</dbReference>
<dbReference type="InterPro" id="IPR029064">
    <property type="entry name" value="Ribosomal_eL30-like_sf"/>
</dbReference>
<dbReference type="InterPro" id="IPR004441">
    <property type="entry name" value="rRNA_MeTrfase_TrmH"/>
</dbReference>
<dbReference type="InterPro" id="IPR001537">
    <property type="entry name" value="SpoU_MeTrfase"/>
</dbReference>
<dbReference type="InterPro" id="IPR013123">
    <property type="entry name" value="SpoU_subst-bd"/>
</dbReference>
<dbReference type="InterPro" id="IPR029026">
    <property type="entry name" value="tRNA_m1G_MTases_N"/>
</dbReference>
<dbReference type="NCBIfam" id="NF008386">
    <property type="entry name" value="PRK11181.1"/>
    <property type="match status" value="1"/>
</dbReference>
<dbReference type="NCBIfam" id="TIGR00186">
    <property type="entry name" value="rRNA_methyl_3"/>
    <property type="match status" value="1"/>
</dbReference>
<dbReference type="PANTHER" id="PTHR46429">
    <property type="entry name" value="23S RRNA (GUANOSINE-2'-O-)-METHYLTRANSFERASE RLMB"/>
    <property type="match status" value="1"/>
</dbReference>
<dbReference type="PANTHER" id="PTHR46429:SF1">
    <property type="entry name" value="23S RRNA (GUANOSINE-2'-O-)-METHYLTRANSFERASE RLMB"/>
    <property type="match status" value="1"/>
</dbReference>
<dbReference type="Pfam" id="PF00588">
    <property type="entry name" value="SpoU_methylase"/>
    <property type="match status" value="1"/>
</dbReference>
<dbReference type="Pfam" id="PF08032">
    <property type="entry name" value="SpoU_sub_bind"/>
    <property type="match status" value="1"/>
</dbReference>
<dbReference type="SMART" id="SM00967">
    <property type="entry name" value="SpoU_sub_bind"/>
    <property type="match status" value="1"/>
</dbReference>
<dbReference type="SUPFAM" id="SSF75217">
    <property type="entry name" value="alpha/beta knot"/>
    <property type="match status" value="1"/>
</dbReference>
<dbReference type="SUPFAM" id="SSF55315">
    <property type="entry name" value="L30e-like"/>
    <property type="match status" value="1"/>
</dbReference>
<proteinExistence type="inferred from homology"/>
<evidence type="ECO:0000255" key="1">
    <source>
        <dbReference type="HAMAP-Rule" id="MF_01887"/>
    </source>
</evidence>
<keyword id="KW-0963">Cytoplasm</keyword>
<keyword id="KW-0489">Methyltransferase</keyword>
<keyword id="KW-0698">rRNA processing</keyword>
<keyword id="KW-0949">S-adenosyl-L-methionine</keyword>
<keyword id="KW-0808">Transferase</keyword>
<feature type="chain" id="PRO_0000159806" description="23S rRNA (guanosine-2'-O-)-methyltransferase RlmB">
    <location>
        <begin position="1"/>
        <end position="247"/>
    </location>
</feature>
<feature type="binding site" evidence="1">
    <location>
        <position position="197"/>
    </location>
    <ligand>
        <name>S-adenosyl-L-methionine</name>
        <dbReference type="ChEBI" id="CHEBI:59789"/>
    </ligand>
</feature>
<feature type="binding site" evidence="1">
    <location>
        <position position="217"/>
    </location>
    <ligand>
        <name>S-adenosyl-L-methionine</name>
        <dbReference type="ChEBI" id="CHEBI:59789"/>
    </ligand>
</feature>
<feature type="binding site" evidence="1">
    <location>
        <position position="226"/>
    </location>
    <ligand>
        <name>S-adenosyl-L-methionine</name>
        <dbReference type="ChEBI" id="CHEBI:59789"/>
    </ligand>
</feature>
<comment type="function">
    <text evidence="1">Specifically methylates the ribose of guanosine 2251 in 23S rRNA.</text>
</comment>
<comment type="catalytic activity">
    <reaction evidence="1">
        <text>guanosine(2251) in 23S rRNA + S-adenosyl-L-methionine = 2'-O-methylguanosine(2251) in 23S rRNA + S-adenosyl-L-homocysteine + H(+)</text>
        <dbReference type="Rhea" id="RHEA:24140"/>
        <dbReference type="Rhea" id="RHEA-COMP:10239"/>
        <dbReference type="Rhea" id="RHEA-COMP:10241"/>
        <dbReference type="ChEBI" id="CHEBI:15378"/>
        <dbReference type="ChEBI" id="CHEBI:57856"/>
        <dbReference type="ChEBI" id="CHEBI:59789"/>
        <dbReference type="ChEBI" id="CHEBI:74269"/>
        <dbReference type="ChEBI" id="CHEBI:74445"/>
        <dbReference type="EC" id="2.1.1.185"/>
    </reaction>
</comment>
<comment type="subcellular location">
    <subcellularLocation>
        <location evidence="1">Cytoplasm</location>
    </subcellularLocation>
</comment>
<comment type="similarity">
    <text evidence="1">Belongs to the class IV-like SAM-binding methyltransferase superfamily. RNA methyltransferase TrmH family. RlmB subfamily.</text>
</comment>
<accession>Q87L11</accession>